<accession>Q160C1</accession>
<reference key="1">
    <citation type="journal article" date="2007" name="J. Bacteriol.">
        <title>The complete genome sequence of Roseobacter denitrificans reveals a mixotrophic rather than photosynthetic metabolism.</title>
        <authorList>
            <person name="Swingley W.D."/>
            <person name="Sadekar S."/>
            <person name="Mastrian S.D."/>
            <person name="Matthies H.J."/>
            <person name="Hao J."/>
            <person name="Ramos H."/>
            <person name="Acharya C.R."/>
            <person name="Conrad A.L."/>
            <person name="Taylor H.L."/>
            <person name="Dejesa L.C."/>
            <person name="Shah M.K."/>
            <person name="O'Huallachain M.E."/>
            <person name="Lince M.T."/>
            <person name="Blankenship R.E."/>
            <person name="Beatty J.T."/>
            <person name="Touchman J.W."/>
        </authorList>
    </citation>
    <scope>NUCLEOTIDE SEQUENCE [LARGE SCALE GENOMIC DNA]</scope>
    <source>
        <strain>ATCC 33942 / OCh 114</strain>
    </source>
</reference>
<keyword id="KW-0028">Amino-acid biosynthesis</keyword>
<keyword id="KW-0368">Histidine biosynthesis</keyword>
<keyword id="KW-0378">Hydrolase</keyword>
<keyword id="KW-0486">Methionine biosynthesis</keyword>
<keyword id="KW-0511">Multifunctional enzyme</keyword>
<keyword id="KW-0521">NADP</keyword>
<keyword id="KW-0554">One-carbon metabolism</keyword>
<keyword id="KW-0560">Oxidoreductase</keyword>
<keyword id="KW-0658">Purine biosynthesis</keyword>
<keyword id="KW-1185">Reference proteome</keyword>
<protein>
    <recommendedName>
        <fullName evidence="1">Bifunctional protein FolD 2</fullName>
    </recommendedName>
    <domain>
        <recommendedName>
            <fullName evidence="1">Methylenetetrahydrofolate dehydrogenase</fullName>
            <ecNumber evidence="1">1.5.1.5</ecNumber>
        </recommendedName>
    </domain>
    <domain>
        <recommendedName>
            <fullName evidence="1">Methenyltetrahydrofolate cyclohydrolase</fullName>
            <ecNumber evidence="1">3.5.4.9</ecNumber>
        </recommendedName>
    </domain>
</protein>
<feature type="chain" id="PRO_0000268483" description="Bifunctional protein FolD 2">
    <location>
        <begin position="1"/>
        <end position="300"/>
    </location>
</feature>
<feature type="binding site" evidence="1">
    <location>
        <begin position="166"/>
        <end position="168"/>
    </location>
    <ligand>
        <name>NADP(+)</name>
        <dbReference type="ChEBI" id="CHEBI:58349"/>
    </ligand>
</feature>
<feature type="binding site" evidence="1">
    <location>
        <position position="191"/>
    </location>
    <ligand>
        <name>NADP(+)</name>
        <dbReference type="ChEBI" id="CHEBI:58349"/>
    </ligand>
</feature>
<feature type="binding site" evidence="1">
    <location>
        <position position="232"/>
    </location>
    <ligand>
        <name>NADP(+)</name>
        <dbReference type="ChEBI" id="CHEBI:58349"/>
    </ligand>
</feature>
<name>FOLD2_ROSDO</name>
<comment type="function">
    <text evidence="1">Catalyzes the oxidation of 5,10-methylenetetrahydrofolate to 5,10-methenyltetrahydrofolate and then the hydrolysis of 5,10-methenyltetrahydrofolate to 10-formyltetrahydrofolate.</text>
</comment>
<comment type="catalytic activity">
    <reaction evidence="1">
        <text>(6R)-5,10-methylene-5,6,7,8-tetrahydrofolate + NADP(+) = (6R)-5,10-methenyltetrahydrofolate + NADPH</text>
        <dbReference type="Rhea" id="RHEA:22812"/>
        <dbReference type="ChEBI" id="CHEBI:15636"/>
        <dbReference type="ChEBI" id="CHEBI:57455"/>
        <dbReference type="ChEBI" id="CHEBI:57783"/>
        <dbReference type="ChEBI" id="CHEBI:58349"/>
        <dbReference type="EC" id="1.5.1.5"/>
    </reaction>
</comment>
<comment type="catalytic activity">
    <reaction evidence="1">
        <text>(6R)-5,10-methenyltetrahydrofolate + H2O = (6R)-10-formyltetrahydrofolate + H(+)</text>
        <dbReference type="Rhea" id="RHEA:23700"/>
        <dbReference type="ChEBI" id="CHEBI:15377"/>
        <dbReference type="ChEBI" id="CHEBI:15378"/>
        <dbReference type="ChEBI" id="CHEBI:57455"/>
        <dbReference type="ChEBI" id="CHEBI:195366"/>
        <dbReference type="EC" id="3.5.4.9"/>
    </reaction>
</comment>
<comment type="pathway">
    <text evidence="1">One-carbon metabolism; tetrahydrofolate interconversion.</text>
</comment>
<comment type="subunit">
    <text evidence="1">Homodimer.</text>
</comment>
<comment type="similarity">
    <text evidence="1">Belongs to the tetrahydrofolate dehydrogenase/cyclohydrolase family.</text>
</comment>
<proteinExistence type="inferred from homology"/>
<gene>
    <name evidence="1" type="primary">folD2</name>
    <name type="ordered locus">RD1_4236</name>
</gene>
<dbReference type="EC" id="1.5.1.5" evidence="1"/>
<dbReference type="EC" id="3.5.4.9" evidence="1"/>
<dbReference type="EMBL" id="CP000362">
    <property type="protein sequence ID" value="ABG33672.1"/>
    <property type="molecule type" value="Genomic_DNA"/>
</dbReference>
<dbReference type="RefSeq" id="WP_011570282.1">
    <property type="nucleotide sequence ID" value="NC_008209.1"/>
</dbReference>
<dbReference type="SMR" id="Q160C1"/>
<dbReference type="STRING" id="375451.RD1_4236"/>
<dbReference type="KEGG" id="rde:RD1_4236"/>
<dbReference type="eggNOG" id="COG0190">
    <property type="taxonomic scope" value="Bacteria"/>
</dbReference>
<dbReference type="HOGENOM" id="CLU_034045_2_1_5"/>
<dbReference type="OrthoDB" id="9803580at2"/>
<dbReference type="UniPathway" id="UPA00193"/>
<dbReference type="Proteomes" id="UP000007029">
    <property type="component" value="Chromosome"/>
</dbReference>
<dbReference type="GO" id="GO:0005829">
    <property type="term" value="C:cytosol"/>
    <property type="evidence" value="ECO:0007669"/>
    <property type="project" value="TreeGrafter"/>
</dbReference>
<dbReference type="GO" id="GO:0004477">
    <property type="term" value="F:methenyltetrahydrofolate cyclohydrolase activity"/>
    <property type="evidence" value="ECO:0007669"/>
    <property type="project" value="UniProtKB-UniRule"/>
</dbReference>
<dbReference type="GO" id="GO:0004488">
    <property type="term" value="F:methylenetetrahydrofolate dehydrogenase (NADP+) activity"/>
    <property type="evidence" value="ECO:0007669"/>
    <property type="project" value="UniProtKB-UniRule"/>
</dbReference>
<dbReference type="GO" id="GO:0000105">
    <property type="term" value="P:L-histidine biosynthetic process"/>
    <property type="evidence" value="ECO:0007669"/>
    <property type="project" value="UniProtKB-KW"/>
</dbReference>
<dbReference type="GO" id="GO:0009086">
    <property type="term" value="P:methionine biosynthetic process"/>
    <property type="evidence" value="ECO:0007669"/>
    <property type="project" value="UniProtKB-KW"/>
</dbReference>
<dbReference type="GO" id="GO:0006164">
    <property type="term" value="P:purine nucleotide biosynthetic process"/>
    <property type="evidence" value="ECO:0007669"/>
    <property type="project" value="UniProtKB-KW"/>
</dbReference>
<dbReference type="GO" id="GO:0035999">
    <property type="term" value="P:tetrahydrofolate interconversion"/>
    <property type="evidence" value="ECO:0007669"/>
    <property type="project" value="UniProtKB-UniRule"/>
</dbReference>
<dbReference type="CDD" id="cd01080">
    <property type="entry name" value="NAD_bind_m-THF_DH_Cyclohyd"/>
    <property type="match status" value="1"/>
</dbReference>
<dbReference type="FunFam" id="3.40.50.720:FF:000006">
    <property type="entry name" value="Bifunctional protein FolD"/>
    <property type="match status" value="1"/>
</dbReference>
<dbReference type="FunFam" id="3.40.50.10860:FF:000005">
    <property type="entry name" value="C-1-tetrahydrofolate synthase, cytoplasmic, putative"/>
    <property type="match status" value="1"/>
</dbReference>
<dbReference type="Gene3D" id="3.40.50.10860">
    <property type="entry name" value="Leucine Dehydrogenase, chain A, domain 1"/>
    <property type="match status" value="1"/>
</dbReference>
<dbReference type="Gene3D" id="3.40.50.720">
    <property type="entry name" value="NAD(P)-binding Rossmann-like Domain"/>
    <property type="match status" value="1"/>
</dbReference>
<dbReference type="HAMAP" id="MF_01576">
    <property type="entry name" value="THF_DHG_CYH"/>
    <property type="match status" value="1"/>
</dbReference>
<dbReference type="InterPro" id="IPR046346">
    <property type="entry name" value="Aminoacid_DH-like_N_sf"/>
</dbReference>
<dbReference type="InterPro" id="IPR036291">
    <property type="entry name" value="NAD(P)-bd_dom_sf"/>
</dbReference>
<dbReference type="InterPro" id="IPR000672">
    <property type="entry name" value="THF_DH/CycHdrlase"/>
</dbReference>
<dbReference type="InterPro" id="IPR020630">
    <property type="entry name" value="THF_DH/CycHdrlase_cat_dom"/>
</dbReference>
<dbReference type="InterPro" id="IPR020867">
    <property type="entry name" value="THF_DH/CycHdrlase_CS"/>
</dbReference>
<dbReference type="InterPro" id="IPR020631">
    <property type="entry name" value="THF_DH/CycHdrlase_NAD-bd_dom"/>
</dbReference>
<dbReference type="NCBIfam" id="NF008058">
    <property type="entry name" value="PRK10792.1"/>
    <property type="match status" value="1"/>
</dbReference>
<dbReference type="NCBIfam" id="NF010783">
    <property type="entry name" value="PRK14186.1"/>
    <property type="match status" value="1"/>
</dbReference>
<dbReference type="NCBIfam" id="NF010785">
    <property type="entry name" value="PRK14188.1"/>
    <property type="match status" value="1"/>
</dbReference>
<dbReference type="PANTHER" id="PTHR48099:SF5">
    <property type="entry name" value="C-1-TETRAHYDROFOLATE SYNTHASE, CYTOPLASMIC"/>
    <property type="match status" value="1"/>
</dbReference>
<dbReference type="PANTHER" id="PTHR48099">
    <property type="entry name" value="C-1-TETRAHYDROFOLATE SYNTHASE, CYTOPLASMIC-RELATED"/>
    <property type="match status" value="1"/>
</dbReference>
<dbReference type="Pfam" id="PF00763">
    <property type="entry name" value="THF_DHG_CYH"/>
    <property type="match status" value="1"/>
</dbReference>
<dbReference type="Pfam" id="PF02882">
    <property type="entry name" value="THF_DHG_CYH_C"/>
    <property type="match status" value="1"/>
</dbReference>
<dbReference type="PRINTS" id="PR00085">
    <property type="entry name" value="THFDHDRGNASE"/>
</dbReference>
<dbReference type="SUPFAM" id="SSF53223">
    <property type="entry name" value="Aminoacid dehydrogenase-like, N-terminal domain"/>
    <property type="match status" value="1"/>
</dbReference>
<dbReference type="SUPFAM" id="SSF51735">
    <property type="entry name" value="NAD(P)-binding Rossmann-fold domains"/>
    <property type="match status" value="1"/>
</dbReference>
<dbReference type="PROSITE" id="PS00766">
    <property type="entry name" value="THF_DHG_CYH_1"/>
    <property type="match status" value="1"/>
</dbReference>
<dbReference type="PROSITE" id="PS00767">
    <property type="entry name" value="THF_DHG_CYH_2"/>
    <property type="match status" value="1"/>
</dbReference>
<evidence type="ECO:0000255" key="1">
    <source>
        <dbReference type="HAMAP-Rule" id="MF_01576"/>
    </source>
</evidence>
<organism>
    <name type="scientific">Roseobacter denitrificans (strain ATCC 33942 / OCh 114)</name>
    <name type="common">Erythrobacter sp. (strain OCh 114)</name>
    <name type="synonym">Roseobacter denitrificans</name>
    <dbReference type="NCBI Taxonomy" id="375451"/>
    <lineage>
        <taxon>Bacteria</taxon>
        <taxon>Pseudomonadati</taxon>
        <taxon>Pseudomonadota</taxon>
        <taxon>Alphaproteobacteria</taxon>
        <taxon>Rhodobacterales</taxon>
        <taxon>Roseobacteraceae</taxon>
        <taxon>Roseobacter</taxon>
    </lineage>
</organism>
<sequence>MAATIIDGKAFAAKVRAQVAEHVTRIKQDHGITPGLAVVLVGEDPASQVYVRSKGKQTVEAGMNSYEHKLDADTSEADLLAVVDKLNKDPNVHGILVQLPLPKHLDEDLIINSIDPAKDVDGFHISNVGLLGTGQKSMVPCTPLGCLMMLREHHGSLSGMNAVVIGRSNIVGKPMAQLLLNDSCTVTIAHSRTKDLPDVVRGADIVVAAVGRPEMVPGDWIKPGATVIDVGINRIDAPEKGEGKTRLVGDCHYDSCAETAGAITPVPGGVGPMTIACLLANTVTSCCRANGLEEPTGLTA</sequence>